<accession>A9MT45</accession>
<organism>
    <name type="scientific">Salmonella paratyphi B (strain ATCC BAA-1250 / SPB7)</name>
    <dbReference type="NCBI Taxonomy" id="1016998"/>
    <lineage>
        <taxon>Bacteria</taxon>
        <taxon>Pseudomonadati</taxon>
        <taxon>Pseudomonadota</taxon>
        <taxon>Gammaproteobacteria</taxon>
        <taxon>Enterobacterales</taxon>
        <taxon>Enterobacteriaceae</taxon>
        <taxon>Salmonella</taxon>
    </lineage>
</organism>
<keyword id="KW-0169">Cobalamin biosynthesis</keyword>
<keyword id="KW-0456">Lyase</keyword>
<keyword id="KW-0489">Methyltransferase</keyword>
<keyword id="KW-0511">Multifunctional enzyme</keyword>
<keyword id="KW-0520">NAD</keyword>
<keyword id="KW-0560">Oxidoreductase</keyword>
<keyword id="KW-0597">Phosphoprotein</keyword>
<keyword id="KW-0627">Porphyrin biosynthesis</keyword>
<keyword id="KW-0949">S-adenosyl-L-methionine</keyword>
<keyword id="KW-0808">Transferase</keyword>
<feature type="chain" id="PRO_0000330555" description="Siroheme synthase">
    <location>
        <begin position="1"/>
        <end position="457"/>
    </location>
</feature>
<feature type="region of interest" description="Precorrin-2 dehydrogenase /sirohydrochlorin ferrochelatase" evidence="1">
    <location>
        <begin position="1"/>
        <end position="204"/>
    </location>
</feature>
<feature type="region of interest" description="Uroporphyrinogen-III C-methyltransferase" evidence="1">
    <location>
        <begin position="216"/>
        <end position="457"/>
    </location>
</feature>
<feature type="active site" description="Proton acceptor" evidence="1">
    <location>
        <position position="248"/>
    </location>
</feature>
<feature type="active site" description="Proton donor" evidence="1">
    <location>
        <position position="270"/>
    </location>
</feature>
<feature type="binding site" evidence="1">
    <location>
        <begin position="22"/>
        <end position="23"/>
    </location>
    <ligand>
        <name>NAD(+)</name>
        <dbReference type="ChEBI" id="CHEBI:57540"/>
    </ligand>
</feature>
<feature type="binding site" evidence="1">
    <location>
        <begin position="43"/>
        <end position="44"/>
    </location>
    <ligand>
        <name>NAD(+)</name>
        <dbReference type="ChEBI" id="CHEBI:57540"/>
    </ligand>
</feature>
<feature type="binding site" evidence="1">
    <location>
        <position position="225"/>
    </location>
    <ligand>
        <name>S-adenosyl-L-methionine</name>
        <dbReference type="ChEBI" id="CHEBI:59789"/>
    </ligand>
</feature>
<feature type="binding site" evidence="1">
    <location>
        <begin position="301"/>
        <end position="303"/>
    </location>
    <ligand>
        <name>S-adenosyl-L-methionine</name>
        <dbReference type="ChEBI" id="CHEBI:59789"/>
    </ligand>
</feature>
<feature type="binding site" evidence="1">
    <location>
        <position position="306"/>
    </location>
    <ligand>
        <name>S-adenosyl-L-methionine</name>
        <dbReference type="ChEBI" id="CHEBI:59789"/>
    </ligand>
</feature>
<feature type="binding site" evidence="1">
    <location>
        <begin position="331"/>
        <end position="332"/>
    </location>
    <ligand>
        <name>S-adenosyl-L-methionine</name>
        <dbReference type="ChEBI" id="CHEBI:59789"/>
    </ligand>
</feature>
<feature type="binding site" evidence="1">
    <location>
        <position position="382"/>
    </location>
    <ligand>
        <name>S-adenosyl-L-methionine</name>
        <dbReference type="ChEBI" id="CHEBI:59789"/>
    </ligand>
</feature>
<feature type="binding site" evidence="1">
    <location>
        <position position="411"/>
    </location>
    <ligand>
        <name>S-adenosyl-L-methionine</name>
        <dbReference type="ChEBI" id="CHEBI:59789"/>
    </ligand>
</feature>
<feature type="modified residue" description="Phosphoserine" evidence="1">
    <location>
        <position position="128"/>
    </location>
</feature>
<protein>
    <recommendedName>
        <fullName evidence="1">Siroheme synthase</fullName>
    </recommendedName>
    <domain>
        <recommendedName>
            <fullName evidence="1">Uroporphyrinogen-III C-methyltransferase</fullName>
            <shortName evidence="1">Urogen III methylase</shortName>
            <ecNumber evidence="1">2.1.1.107</ecNumber>
        </recommendedName>
        <alternativeName>
            <fullName evidence="1">SUMT</fullName>
        </alternativeName>
        <alternativeName>
            <fullName evidence="1">Uroporphyrinogen III methylase</fullName>
            <shortName evidence="1">UROM</shortName>
        </alternativeName>
    </domain>
    <domain>
        <recommendedName>
            <fullName evidence="1">Precorrin-2 dehydrogenase</fullName>
            <ecNumber evidence="1">1.3.1.76</ecNumber>
        </recommendedName>
    </domain>
    <domain>
        <recommendedName>
            <fullName evidence="1">Sirohydrochlorin ferrochelatase</fullName>
            <ecNumber evidence="1">4.99.1.4</ecNumber>
        </recommendedName>
    </domain>
</protein>
<dbReference type="EC" id="2.1.1.107" evidence="1"/>
<dbReference type="EC" id="1.3.1.76" evidence="1"/>
<dbReference type="EC" id="4.99.1.4" evidence="1"/>
<dbReference type="EMBL" id="CP000886">
    <property type="protein sequence ID" value="ABX69645.1"/>
    <property type="molecule type" value="Genomic_DNA"/>
</dbReference>
<dbReference type="RefSeq" id="WP_000349897.1">
    <property type="nucleotide sequence ID" value="NC_010102.1"/>
</dbReference>
<dbReference type="SMR" id="A9MT45"/>
<dbReference type="KEGG" id="spq:SPAB_04328"/>
<dbReference type="PATRIC" id="fig|1016998.12.peg.4074"/>
<dbReference type="HOGENOM" id="CLU_011276_2_0_6"/>
<dbReference type="BioCyc" id="SENT1016998:SPAB_RS17620-MONOMER"/>
<dbReference type="UniPathway" id="UPA00148">
    <property type="reaction ID" value="UER00211"/>
</dbReference>
<dbReference type="UniPathway" id="UPA00148">
    <property type="reaction ID" value="UER00222"/>
</dbReference>
<dbReference type="UniPathway" id="UPA00262">
    <property type="reaction ID" value="UER00211"/>
</dbReference>
<dbReference type="UniPathway" id="UPA00262">
    <property type="reaction ID" value="UER00222"/>
</dbReference>
<dbReference type="UniPathway" id="UPA00262">
    <property type="reaction ID" value="UER00376"/>
</dbReference>
<dbReference type="Proteomes" id="UP000008556">
    <property type="component" value="Chromosome"/>
</dbReference>
<dbReference type="GO" id="GO:0051287">
    <property type="term" value="F:NAD binding"/>
    <property type="evidence" value="ECO:0007669"/>
    <property type="project" value="InterPro"/>
</dbReference>
<dbReference type="GO" id="GO:0043115">
    <property type="term" value="F:precorrin-2 dehydrogenase activity"/>
    <property type="evidence" value="ECO:0007669"/>
    <property type="project" value="UniProtKB-UniRule"/>
</dbReference>
<dbReference type="GO" id="GO:0051266">
    <property type="term" value="F:sirohydrochlorin ferrochelatase activity"/>
    <property type="evidence" value="ECO:0007669"/>
    <property type="project" value="UniProtKB-EC"/>
</dbReference>
<dbReference type="GO" id="GO:0004851">
    <property type="term" value="F:uroporphyrin-III C-methyltransferase activity"/>
    <property type="evidence" value="ECO:0007669"/>
    <property type="project" value="UniProtKB-UniRule"/>
</dbReference>
<dbReference type="GO" id="GO:0009236">
    <property type="term" value="P:cobalamin biosynthetic process"/>
    <property type="evidence" value="ECO:0007669"/>
    <property type="project" value="UniProtKB-UniRule"/>
</dbReference>
<dbReference type="GO" id="GO:0032259">
    <property type="term" value="P:methylation"/>
    <property type="evidence" value="ECO:0007669"/>
    <property type="project" value="UniProtKB-KW"/>
</dbReference>
<dbReference type="GO" id="GO:0019354">
    <property type="term" value="P:siroheme biosynthetic process"/>
    <property type="evidence" value="ECO:0007669"/>
    <property type="project" value="UniProtKB-UniRule"/>
</dbReference>
<dbReference type="CDD" id="cd11642">
    <property type="entry name" value="SUMT"/>
    <property type="match status" value="1"/>
</dbReference>
<dbReference type="FunFam" id="1.10.8.210:FF:000001">
    <property type="entry name" value="Siroheme synthase"/>
    <property type="match status" value="1"/>
</dbReference>
<dbReference type="FunFam" id="3.30.160.110:FF:000001">
    <property type="entry name" value="Siroheme synthase"/>
    <property type="match status" value="1"/>
</dbReference>
<dbReference type="FunFam" id="3.30.950.10:FF:000001">
    <property type="entry name" value="Siroheme synthase"/>
    <property type="match status" value="1"/>
</dbReference>
<dbReference type="FunFam" id="3.40.1010.10:FF:000001">
    <property type="entry name" value="Siroheme synthase"/>
    <property type="match status" value="1"/>
</dbReference>
<dbReference type="FunFam" id="3.40.50.720:FF:000092">
    <property type="entry name" value="Siroheme synthase"/>
    <property type="match status" value="1"/>
</dbReference>
<dbReference type="Gene3D" id="3.40.1010.10">
    <property type="entry name" value="Cobalt-precorrin-4 Transmethylase, Domain 1"/>
    <property type="match status" value="1"/>
</dbReference>
<dbReference type="Gene3D" id="3.30.950.10">
    <property type="entry name" value="Methyltransferase, Cobalt-precorrin-4 Transmethylase, Domain 2"/>
    <property type="match status" value="1"/>
</dbReference>
<dbReference type="Gene3D" id="3.40.50.720">
    <property type="entry name" value="NAD(P)-binding Rossmann-like Domain"/>
    <property type="match status" value="1"/>
</dbReference>
<dbReference type="Gene3D" id="1.10.8.210">
    <property type="entry name" value="Sirohaem synthase, dimerisation domain"/>
    <property type="match status" value="1"/>
</dbReference>
<dbReference type="Gene3D" id="3.30.160.110">
    <property type="entry name" value="Siroheme synthase, domain 2"/>
    <property type="match status" value="1"/>
</dbReference>
<dbReference type="HAMAP" id="MF_01646">
    <property type="entry name" value="Siroheme_synth"/>
    <property type="match status" value="1"/>
</dbReference>
<dbReference type="InterPro" id="IPR000878">
    <property type="entry name" value="4pyrrol_Mease"/>
</dbReference>
<dbReference type="InterPro" id="IPR035996">
    <property type="entry name" value="4pyrrol_Methylase_sf"/>
</dbReference>
<dbReference type="InterPro" id="IPR014777">
    <property type="entry name" value="4pyrrole_Mease_sub1"/>
</dbReference>
<dbReference type="InterPro" id="IPR014776">
    <property type="entry name" value="4pyrrole_Mease_sub2"/>
</dbReference>
<dbReference type="InterPro" id="IPR006366">
    <property type="entry name" value="CobA/CysG_C"/>
</dbReference>
<dbReference type="InterPro" id="IPR036291">
    <property type="entry name" value="NAD(P)-bd_dom_sf"/>
</dbReference>
<dbReference type="InterPro" id="IPR050161">
    <property type="entry name" value="Siro_Cobalamin_biosynth"/>
</dbReference>
<dbReference type="InterPro" id="IPR037115">
    <property type="entry name" value="Sirohaem_synt_dimer_dom_sf"/>
</dbReference>
<dbReference type="InterPro" id="IPR012409">
    <property type="entry name" value="Sirohaem_synth"/>
</dbReference>
<dbReference type="InterPro" id="IPR028281">
    <property type="entry name" value="Sirohaem_synthase_central"/>
</dbReference>
<dbReference type="InterPro" id="IPR019478">
    <property type="entry name" value="Sirohaem_synthase_dimer_dom"/>
</dbReference>
<dbReference type="InterPro" id="IPR006367">
    <property type="entry name" value="Sirohaem_synthase_N"/>
</dbReference>
<dbReference type="InterPro" id="IPR003043">
    <property type="entry name" value="Uropor_MeTrfase_CS"/>
</dbReference>
<dbReference type="NCBIfam" id="TIGR01469">
    <property type="entry name" value="cobA_cysG_Cterm"/>
    <property type="match status" value="1"/>
</dbReference>
<dbReference type="NCBIfam" id="TIGR01470">
    <property type="entry name" value="cysG_Nterm"/>
    <property type="match status" value="1"/>
</dbReference>
<dbReference type="NCBIfam" id="NF004790">
    <property type="entry name" value="PRK06136.1"/>
    <property type="match status" value="1"/>
</dbReference>
<dbReference type="NCBIfam" id="NF007922">
    <property type="entry name" value="PRK10637.1"/>
    <property type="match status" value="1"/>
</dbReference>
<dbReference type="PANTHER" id="PTHR45790:SF1">
    <property type="entry name" value="SIROHEME SYNTHASE"/>
    <property type="match status" value="1"/>
</dbReference>
<dbReference type="PANTHER" id="PTHR45790">
    <property type="entry name" value="SIROHEME SYNTHASE-RELATED"/>
    <property type="match status" value="1"/>
</dbReference>
<dbReference type="Pfam" id="PF10414">
    <property type="entry name" value="CysG_dimeriser"/>
    <property type="match status" value="1"/>
</dbReference>
<dbReference type="Pfam" id="PF13241">
    <property type="entry name" value="NAD_binding_7"/>
    <property type="match status" value="1"/>
</dbReference>
<dbReference type="Pfam" id="PF14824">
    <property type="entry name" value="Sirohm_synth_M"/>
    <property type="match status" value="1"/>
</dbReference>
<dbReference type="Pfam" id="PF00590">
    <property type="entry name" value="TP_methylase"/>
    <property type="match status" value="1"/>
</dbReference>
<dbReference type="PIRSF" id="PIRSF036426">
    <property type="entry name" value="Sirohaem_synth"/>
    <property type="match status" value="1"/>
</dbReference>
<dbReference type="SUPFAM" id="SSF51735">
    <property type="entry name" value="NAD(P)-binding Rossmann-fold domains"/>
    <property type="match status" value="1"/>
</dbReference>
<dbReference type="SUPFAM" id="SSF75615">
    <property type="entry name" value="Siroheme synthase middle domains-like"/>
    <property type="match status" value="1"/>
</dbReference>
<dbReference type="SUPFAM" id="SSF53790">
    <property type="entry name" value="Tetrapyrrole methylase"/>
    <property type="match status" value="1"/>
</dbReference>
<dbReference type="PROSITE" id="PS00839">
    <property type="entry name" value="SUMT_1"/>
    <property type="match status" value="1"/>
</dbReference>
<dbReference type="PROSITE" id="PS00840">
    <property type="entry name" value="SUMT_2"/>
    <property type="match status" value="1"/>
</dbReference>
<comment type="function">
    <text evidence="1">Multifunctional enzyme that catalyzes the SAM-dependent methylations of uroporphyrinogen III at position C-2 and C-7 to form precorrin-2 via precorrin-1. Then it catalyzes the NAD-dependent ring dehydrogenation of precorrin-2 to yield sirohydrochlorin. Finally, it catalyzes the ferrochelation of sirohydrochlorin to yield siroheme.</text>
</comment>
<comment type="catalytic activity">
    <reaction evidence="1">
        <text>uroporphyrinogen III + 2 S-adenosyl-L-methionine = precorrin-2 + 2 S-adenosyl-L-homocysteine + H(+)</text>
        <dbReference type="Rhea" id="RHEA:32459"/>
        <dbReference type="ChEBI" id="CHEBI:15378"/>
        <dbReference type="ChEBI" id="CHEBI:57308"/>
        <dbReference type="ChEBI" id="CHEBI:57856"/>
        <dbReference type="ChEBI" id="CHEBI:58827"/>
        <dbReference type="ChEBI" id="CHEBI:59789"/>
        <dbReference type="EC" id="2.1.1.107"/>
    </reaction>
</comment>
<comment type="catalytic activity">
    <reaction evidence="1">
        <text>precorrin-2 + NAD(+) = sirohydrochlorin + NADH + 2 H(+)</text>
        <dbReference type="Rhea" id="RHEA:15613"/>
        <dbReference type="ChEBI" id="CHEBI:15378"/>
        <dbReference type="ChEBI" id="CHEBI:57540"/>
        <dbReference type="ChEBI" id="CHEBI:57945"/>
        <dbReference type="ChEBI" id="CHEBI:58351"/>
        <dbReference type="ChEBI" id="CHEBI:58827"/>
        <dbReference type="EC" id="1.3.1.76"/>
    </reaction>
</comment>
<comment type="catalytic activity">
    <reaction evidence="1">
        <text>siroheme + 2 H(+) = sirohydrochlorin + Fe(2+)</text>
        <dbReference type="Rhea" id="RHEA:24360"/>
        <dbReference type="ChEBI" id="CHEBI:15378"/>
        <dbReference type="ChEBI" id="CHEBI:29033"/>
        <dbReference type="ChEBI" id="CHEBI:58351"/>
        <dbReference type="ChEBI" id="CHEBI:60052"/>
        <dbReference type="EC" id="4.99.1.4"/>
    </reaction>
</comment>
<comment type="pathway">
    <text evidence="1">Cofactor biosynthesis; adenosylcobalamin biosynthesis; precorrin-2 from uroporphyrinogen III: step 1/1.</text>
</comment>
<comment type="pathway">
    <text evidence="1">Cofactor biosynthesis; adenosylcobalamin biosynthesis; sirohydrochlorin from precorrin-2: step 1/1.</text>
</comment>
<comment type="pathway">
    <text evidence="1">Porphyrin-containing compound metabolism; siroheme biosynthesis; precorrin-2 from uroporphyrinogen III: step 1/1.</text>
</comment>
<comment type="pathway">
    <text evidence="1">Porphyrin-containing compound metabolism; siroheme biosynthesis; siroheme from sirohydrochlorin: step 1/1.</text>
</comment>
<comment type="pathway">
    <text evidence="1">Porphyrin-containing compound metabolism; siroheme biosynthesis; sirohydrochlorin from precorrin-2: step 1/1.</text>
</comment>
<comment type="similarity">
    <text evidence="1">In the N-terminal section; belongs to the precorrin-2 dehydrogenase / sirohydrochlorin ferrochelatase family.</text>
</comment>
<comment type="similarity">
    <text evidence="1">In the C-terminal section; belongs to the precorrin methyltransferase family.</text>
</comment>
<reference key="1">
    <citation type="submission" date="2007-11" db="EMBL/GenBank/DDBJ databases">
        <authorList>
            <consortium name="The Salmonella enterica serovar Paratyphi B Genome Sequencing Project"/>
            <person name="McClelland M."/>
            <person name="Sanderson E.K."/>
            <person name="Porwollik S."/>
            <person name="Spieth J."/>
            <person name="Clifton W.S."/>
            <person name="Fulton R."/>
            <person name="Cordes M."/>
            <person name="Wollam A."/>
            <person name="Shah N."/>
            <person name="Pepin K."/>
            <person name="Bhonagiri V."/>
            <person name="Nash W."/>
            <person name="Johnson M."/>
            <person name="Thiruvilangam P."/>
            <person name="Wilson R."/>
        </authorList>
    </citation>
    <scope>NUCLEOTIDE SEQUENCE [LARGE SCALE GENOMIC DNA]</scope>
    <source>
        <strain>ATCC BAA-1250 / SPB7</strain>
    </source>
</reference>
<name>CYSG_SALPB</name>
<evidence type="ECO:0000255" key="1">
    <source>
        <dbReference type="HAMAP-Rule" id="MF_01646"/>
    </source>
</evidence>
<proteinExistence type="inferred from homology"/>
<gene>
    <name evidence="1" type="primary">cysG</name>
    <name type="ordered locus">SPAB_04328</name>
</gene>
<sequence length="457" mass="50159">MDHLPIFCQLRDRDCLIVGGGDVAERKARLLLEAGARLTVNALTFIPQFTVWANEGMLTLVEGPFDETLLDSCWLAIAATDDDTVNQRVSDAAESRRIFCNVVDAPKAASFIMPSIIDRSPLMVAVSSGGTSPVLARLLREKLESLLPQHLGQVARYAGQLRARVKKQFATMGERRRFWEKFFVNDRLAQSLANADEKAVNATTERLFSEPLDHRGEVVLVGAGPGDAGLLTLKGLQQIQQADIVVYDRLVSDDIMNLVRRDADRVFVGKRAGYHCVPQEEINQILLREAQKGKRVVRLKGGDPFIFGRGGEELETLCHAGIPFSVVPGITAASGCSAYSGIPLTHRDYAQSVRLVTGHLKTGGELDWENLAAEKQTLVFYMGLNQAATIQEKLIAFGMQADMPVALVENGTSVKQRVVHGVLTQLGELAQQVESPALIIVGRVVGLRDKLNWFSNY</sequence>